<accession>C0HKN4</accession>
<sequence length="17" mass="1702">GFGSLLGKALKIGTNLL</sequence>
<dbReference type="GO" id="GO:0005576">
    <property type="term" value="C:extracellular region"/>
    <property type="evidence" value="ECO:0007669"/>
    <property type="project" value="UniProtKB-SubCell"/>
</dbReference>
<dbReference type="GO" id="GO:0006952">
    <property type="term" value="P:defense response"/>
    <property type="evidence" value="ECO:0007669"/>
    <property type="project" value="UniProtKB-KW"/>
</dbReference>
<name>CRR2_XENRU</name>
<organism evidence="2">
    <name type="scientific">Xenopus ruwenzoriensis</name>
    <name type="common">Uganda clawed frog</name>
    <dbReference type="NCBI Taxonomy" id="105430"/>
    <lineage>
        <taxon>Eukaryota</taxon>
        <taxon>Metazoa</taxon>
        <taxon>Chordata</taxon>
        <taxon>Craniata</taxon>
        <taxon>Vertebrata</taxon>
        <taxon>Euteleostomi</taxon>
        <taxon>Amphibia</taxon>
        <taxon>Batrachia</taxon>
        <taxon>Anura</taxon>
        <taxon>Pipoidea</taxon>
        <taxon>Pipidae</taxon>
        <taxon>Xenopodinae</taxon>
        <taxon>Xenopus</taxon>
        <taxon>Xenopus</taxon>
    </lineage>
</organism>
<proteinExistence type="evidence at protein level"/>
<reference evidence="3" key="1">
    <citation type="journal article" date="2016" name="Comp. Biochem. Physiol.">
        <title>Peptidomic analysis of the extensive array of host-defense peptides in skin secretions of the dodecaploid frog Xenopus ruwenzoriensis (Pipidae).</title>
        <authorList>
            <person name="Coquet L."/>
            <person name="Kolodziejek J."/>
            <person name="Jouenne T."/>
            <person name="Nowotny N."/>
            <person name="King J.D."/>
            <person name="Conlon J.M."/>
        </authorList>
    </citation>
    <scope>PROTEIN SEQUENCE</scope>
    <scope>SUBCELLULAR LOCATION</scope>
    <scope>MASS SPECTROMETRY</scope>
    <scope>AMIDATION AT LEU-17</scope>
    <source>
        <tissue evidence="2">Skin secretion</tissue>
    </source>
</reference>
<keyword id="KW-0027">Amidation</keyword>
<keyword id="KW-0878">Amphibian defense peptide</keyword>
<keyword id="KW-0903">Direct protein sequencing</keyword>
<keyword id="KW-0964">Secreted</keyword>
<protein>
    <recommendedName>
        <fullName evidence="2">Caerulein precursor fragment-related peptide R2</fullName>
    </recommendedName>
    <alternativeName>
        <fullName evidence="2">CPF-RP-R2</fullName>
    </alternativeName>
</protein>
<comment type="subcellular location">
    <subcellularLocation>
        <location evidence="1">Secreted</location>
    </subcellularLocation>
</comment>
<comment type="tissue specificity">
    <text evidence="4">Expressed by the skin glands.</text>
</comment>
<comment type="mass spectrometry" mass="1701.0" method="MALDI" evidence="1"/>
<comment type="similarity">
    <text evidence="3">Belongs to the gastrin/cholecystokinin family.</text>
</comment>
<evidence type="ECO:0000269" key="1">
    <source>
    </source>
</evidence>
<evidence type="ECO:0000303" key="2">
    <source>
    </source>
</evidence>
<evidence type="ECO:0000305" key="3"/>
<evidence type="ECO:0000305" key="4">
    <source>
    </source>
</evidence>
<feature type="peptide" id="PRO_0000440921" description="Caerulein precursor fragment-related peptide R2" evidence="1">
    <location>
        <begin position="1"/>
        <end position="17"/>
    </location>
</feature>
<feature type="modified residue" description="Leucine amide" evidence="1">
    <location>
        <position position="17"/>
    </location>
</feature>